<name>3HIDH_MESAU</name>
<gene>
    <name evidence="1" type="primary">HIBADH</name>
</gene>
<dbReference type="EC" id="1.1.1.31"/>
<dbReference type="SMR" id="P86199"/>
<dbReference type="UniPathway" id="UPA00362"/>
<dbReference type="Proteomes" id="UP000189706">
    <property type="component" value="Unplaced"/>
</dbReference>
<dbReference type="GO" id="GO:0005739">
    <property type="term" value="C:mitochondrion"/>
    <property type="evidence" value="ECO:0007669"/>
    <property type="project" value="UniProtKB-SubCell"/>
</dbReference>
<dbReference type="GO" id="GO:0008442">
    <property type="term" value="F:3-hydroxyisobutyrate dehydrogenase activity"/>
    <property type="evidence" value="ECO:0000250"/>
    <property type="project" value="UniProtKB"/>
</dbReference>
<dbReference type="GO" id="GO:0006574">
    <property type="term" value="P:valine catabolic process"/>
    <property type="evidence" value="ECO:0000250"/>
    <property type="project" value="UniProtKB"/>
</dbReference>
<dbReference type="Gene3D" id="1.10.1040.10">
    <property type="entry name" value="N-(1-d-carboxylethyl)-l-norvaline Dehydrogenase, domain 2"/>
    <property type="match status" value="2"/>
</dbReference>
<dbReference type="InterPro" id="IPR008927">
    <property type="entry name" value="6-PGluconate_DH-like_C_sf"/>
</dbReference>
<dbReference type="InterPro" id="IPR013328">
    <property type="entry name" value="6PGD_dom2"/>
</dbReference>
<dbReference type="InterPro" id="IPR036291">
    <property type="entry name" value="NAD(P)-bd_dom_sf"/>
</dbReference>
<dbReference type="PANTHER" id="PTHR22981:SF7">
    <property type="entry name" value="3-HYDROXYISOBUTYRATE DEHYDROGENASE, MITOCHONDRIAL"/>
    <property type="match status" value="1"/>
</dbReference>
<dbReference type="PANTHER" id="PTHR22981">
    <property type="entry name" value="3-HYDROXYISOBUTYRATE DEHYDROGENASE-RELATED"/>
    <property type="match status" value="1"/>
</dbReference>
<dbReference type="SUPFAM" id="SSF48179">
    <property type="entry name" value="6-phosphogluconate dehydrogenase C-terminal domain-like"/>
    <property type="match status" value="1"/>
</dbReference>
<dbReference type="SUPFAM" id="SSF51735">
    <property type="entry name" value="NAD(P)-binding Rossmann-fold domains"/>
    <property type="match status" value="1"/>
</dbReference>
<comment type="catalytic activity">
    <reaction evidence="1">
        <text>3-hydroxy-2-methylpropanoate + NAD(+) = 2-methyl-3-oxopropanoate + NADH + H(+)</text>
        <dbReference type="Rhea" id="RHEA:17681"/>
        <dbReference type="ChEBI" id="CHEBI:11805"/>
        <dbReference type="ChEBI" id="CHEBI:15378"/>
        <dbReference type="ChEBI" id="CHEBI:57540"/>
        <dbReference type="ChEBI" id="CHEBI:57700"/>
        <dbReference type="ChEBI" id="CHEBI:57945"/>
        <dbReference type="EC" id="1.1.1.31"/>
    </reaction>
</comment>
<comment type="pathway">
    <text>Amino-acid degradation; L-valine degradation.</text>
</comment>
<comment type="subunit">
    <text evidence="1">Homodimer.</text>
</comment>
<comment type="subcellular location">
    <subcellularLocation>
        <location evidence="1">Mitochondrion</location>
    </subcellularLocation>
</comment>
<comment type="similarity">
    <text evidence="4">Belongs to the HIBADH-related family. 3-hydroxyisobutyrate dehydrogenase subfamily.</text>
</comment>
<protein>
    <recommendedName>
        <fullName evidence="1">3-hydroxyisobutyrate dehydrogenase, mitochondrial</fullName>
        <shortName evidence="1">HIBADH</shortName>
        <ecNumber>1.1.1.31</ecNumber>
    </recommendedName>
</protein>
<feature type="chain" id="PRO_0000394394" description="3-hydroxyisobutyrate dehydrogenase, mitochondrial">
    <location>
        <begin position="1" status="less than"/>
        <end position="130"/>
    </location>
</feature>
<feature type="binding site" evidence="2">
    <location>
        <begin position="1"/>
        <end position="17" status="greater than"/>
    </location>
    <ligand>
        <name>NAD(+)</name>
        <dbReference type="ChEBI" id="CHEBI:57540"/>
    </ligand>
</feature>
<feature type="binding site" evidence="2">
    <location>
        <begin position="25"/>
        <end position="26"/>
    </location>
    <ligand>
        <name>NAD(+)</name>
        <dbReference type="ChEBI" id="CHEBI:57540"/>
    </ligand>
</feature>
<feature type="binding site" evidence="2">
    <location>
        <position position="30"/>
    </location>
    <ligand>
        <name>NAD(+)</name>
        <dbReference type="ChEBI" id="CHEBI:57540"/>
    </ligand>
</feature>
<feature type="modified residue" description="N6-acetyllysine" evidence="3">
    <location>
        <position position="43"/>
    </location>
</feature>
<feature type="modified residue" description="N6-acetyllysine; alternate" evidence="3">
    <location>
        <position position="47"/>
    </location>
</feature>
<feature type="modified residue" description="N6-succinyllysine; alternate" evidence="3">
    <location>
        <position position="47"/>
    </location>
</feature>
<feature type="modified residue" description="N6-succinyllysine" evidence="3">
    <location>
        <position position="101"/>
    </location>
</feature>
<feature type="non-consecutive residues" evidence="4">
    <location>
        <begin position="17"/>
        <end position="18"/>
    </location>
</feature>
<feature type="non-consecutive residues" evidence="4">
    <location>
        <begin position="43"/>
        <end position="44"/>
    </location>
</feature>
<feature type="non-consecutive residues" evidence="4">
    <location>
        <begin position="65"/>
        <end position="66"/>
    </location>
</feature>
<feature type="non-consecutive residues" evidence="4">
    <location>
        <begin position="88"/>
        <end position="89"/>
    </location>
</feature>
<feature type="non-consecutive residues" evidence="4">
    <location>
        <begin position="115"/>
        <end position="116"/>
    </location>
</feature>
<feature type="non-terminal residue">
    <location>
        <position position="1"/>
    </location>
</feature>
<sequence>TPVGFIGLGNMGNPMAKADRIITMLPSSMNSIEVYSGANGILKEVEKMGAVFMDAPVSGGVGAARICNNMLLAISMIGTAEAMNLGIRDLGLAQDSATSTKTPILLGSVAHQIYRDFSSVFQYLREEETF</sequence>
<keyword id="KW-0007">Acetylation</keyword>
<keyword id="KW-0101">Branched-chain amino acid catabolism</keyword>
<keyword id="KW-0496">Mitochondrion</keyword>
<keyword id="KW-0520">NAD</keyword>
<keyword id="KW-0560">Oxidoreductase</keyword>
<keyword id="KW-1185">Reference proteome</keyword>
<reference key="1">
    <citation type="journal article" date="2010" name="Asian J. Androl.">
        <title>Glucose-regulated protein precursor (GRP78) and tumor rejection antigen (GP96) are unique to hamster caput epididymal spermatozoa.</title>
        <authorList>
            <person name="Kameshwari D.B."/>
            <person name="Bhande S."/>
            <person name="Sundaram C.S."/>
            <person name="Kota V."/>
            <person name="Siva A.B."/>
            <person name="Shivaji S."/>
        </authorList>
    </citation>
    <scope>IDENTIFICATION BY MASS SPECTROMETRY</scope>
</reference>
<evidence type="ECO:0000250" key="1">
    <source>
        <dbReference type="UniProtKB" id="P29266"/>
    </source>
</evidence>
<evidence type="ECO:0000250" key="2">
    <source>
        <dbReference type="UniProtKB" id="P31937"/>
    </source>
</evidence>
<evidence type="ECO:0000250" key="3">
    <source>
        <dbReference type="UniProtKB" id="Q99L13"/>
    </source>
</evidence>
<evidence type="ECO:0000305" key="4"/>
<organism>
    <name type="scientific">Mesocricetus auratus</name>
    <name type="common">Golden hamster</name>
    <dbReference type="NCBI Taxonomy" id="10036"/>
    <lineage>
        <taxon>Eukaryota</taxon>
        <taxon>Metazoa</taxon>
        <taxon>Chordata</taxon>
        <taxon>Craniata</taxon>
        <taxon>Vertebrata</taxon>
        <taxon>Euteleostomi</taxon>
        <taxon>Mammalia</taxon>
        <taxon>Eutheria</taxon>
        <taxon>Euarchontoglires</taxon>
        <taxon>Glires</taxon>
        <taxon>Rodentia</taxon>
        <taxon>Myomorpha</taxon>
        <taxon>Muroidea</taxon>
        <taxon>Cricetidae</taxon>
        <taxon>Cricetinae</taxon>
        <taxon>Mesocricetus</taxon>
    </lineage>
</organism>
<accession>P86199</accession>
<proteinExistence type="evidence at protein level"/>